<gene>
    <name type="primary">vapB38</name>
    <name type="ordered locus">MT2568</name>
</gene>
<dbReference type="EMBL" id="AE000516">
    <property type="protein sequence ID" value="AAK46872.1"/>
    <property type="molecule type" value="Genomic_DNA"/>
</dbReference>
<dbReference type="PIR" id="D70869">
    <property type="entry name" value="D70869"/>
</dbReference>
<dbReference type="RefSeq" id="WP_003412749.1">
    <property type="nucleotide sequence ID" value="NZ_KK341227.1"/>
</dbReference>
<dbReference type="SMR" id="P9WJ24"/>
<dbReference type="KEGG" id="mtc:MT2568"/>
<dbReference type="PATRIC" id="fig|83331.31.peg.2770"/>
<dbReference type="HOGENOM" id="CLU_186849_1_0_11"/>
<dbReference type="Proteomes" id="UP000001020">
    <property type="component" value="Chromosome"/>
</dbReference>
<sequence>MRTTLDLDDDVIAAARELASSQRRSLGSVISELARRGLMPGRVEADDGLPVIRVPAGTPPITPEMVRRALDED</sequence>
<reference key="1">
    <citation type="journal article" date="2002" name="J. Bacteriol.">
        <title>Whole-genome comparison of Mycobacterium tuberculosis clinical and laboratory strains.</title>
        <authorList>
            <person name="Fleischmann R.D."/>
            <person name="Alland D."/>
            <person name="Eisen J.A."/>
            <person name="Carpenter L."/>
            <person name="White O."/>
            <person name="Peterson J.D."/>
            <person name="DeBoy R.T."/>
            <person name="Dodson R.J."/>
            <person name="Gwinn M.L."/>
            <person name="Haft D.H."/>
            <person name="Hickey E.K."/>
            <person name="Kolonay J.F."/>
            <person name="Nelson W.C."/>
            <person name="Umayam L.A."/>
            <person name="Ermolaeva M.D."/>
            <person name="Salzberg S.L."/>
            <person name="Delcher A."/>
            <person name="Utterback T.R."/>
            <person name="Weidman J.F."/>
            <person name="Khouri H.M."/>
            <person name="Gill J."/>
            <person name="Mikula A."/>
            <person name="Bishai W."/>
            <person name="Jacobs W.R. Jr."/>
            <person name="Venter J.C."/>
            <person name="Fraser C.M."/>
        </authorList>
    </citation>
    <scope>NUCLEOTIDE SEQUENCE [LARGE SCALE GENOMIC DNA]</scope>
    <source>
        <strain>CDC 1551 / Oshkosh</strain>
    </source>
</reference>
<feature type="chain" id="PRO_0000427904" description="Putative antitoxin VapB38">
    <location>
        <begin position="1"/>
        <end position="73"/>
    </location>
</feature>
<comment type="function">
    <text evidence="1">Probable antitoxin component of a type II toxin-antitoxin (TA) system. Its putative cognate toxin is VapC38 (By similarity).</text>
</comment>
<accession>P9WJ24</accession>
<accession>L0TCP6</accession>
<accession>O53218</accession>
<accession>Q7D718</accession>
<evidence type="ECO:0000250" key="1"/>
<organism>
    <name type="scientific">Mycobacterium tuberculosis (strain CDC 1551 / Oshkosh)</name>
    <dbReference type="NCBI Taxonomy" id="83331"/>
    <lineage>
        <taxon>Bacteria</taxon>
        <taxon>Bacillati</taxon>
        <taxon>Actinomycetota</taxon>
        <taxon>Actinomycetes</taxon>
        <taxon>Mycobacteriales</taxon>
        <taxon>Mycobacteriaceae</taxon>
        <taxon>Mycobacterium</taxon>
        <taxon>Mycobacterium tuberculosis complex</taxon>
    </lineage>
</organism>
<name>VPB38_MYCTO</name>
<keyword id="KW-1185">Reference proteome</keyword>
<keyword id="KW-1277">Toxin-antitoxin system</keyword>
<proteinExistence type="inferred from homology"/>
<protein>
    <recommendedName>
        <fullName>Putative antitoxin VapB38</fullName>
    </recommendedName>
</protein>